<reference key="1">
    <citation type="submission" date="2003-06" db="EMBL/GenBank/DDBJ databases">
        <title>The complete genome sequence of Haemophilus ducreyi.</title>
        <authorList>
            <person name="Munson R.S. Jr."/>
            <person name="Ray W.C."/>
            <person name="Mahairas G."/>
            <person name="Sabo P."/>
            <person name="Mungur R."/>
            <person name="Johnson L."/>
            <person name="Nguyen D."/>
            <person name="Wang J."/>
            <person name="Forst C."/>
            <person name="Hood L."/>
        </authorList>
    </citation>
    <scope>NUCLEOTIDE SEQUENCE [LARGE SCALE GENOMIC DNA]</scope>
    <source>
        <strain>35000HP / ATCC 700724</strain>
    </source>
</reference>
<keyword id="KW-0233">DNA recombination</keyword>
<keyword id="KW-1185">Reference proteome</keyword>
<keyword id="KW-0814">Transposable element</keyword>
<keyword id="KW-0815">Transposition</keyword>
<organism>
    <name type="scientific">Haemophilus ducreyi (strain 35000HP / ATCC 700724)</name>
    <dbReference type="NCBI Taxonomy" id="233412"/>
    <lineage>
        <taxon>Bacteria</taxon>
        <taxon>Pseudomonadati</taxon>
        <taxon>Pseudomonadota</taxon>
        <taxon>Gammaproteobacteria</taxon>
        <taxon>Pasteurellales</taxon>
        <taxon>Pasteurellaceae</taxon>
        <taxon>Haemophilus</taxon>
    </lineage>
</organism>
<protein>
    <recommendedName>
        <fullName>Insertion element IS1 protein InsA</fullName>
    </recommendedName>
</protein>
<feature type="chain" id="PRO_0000075396" description="Insertion element IS1 protein InsA">
    <location>
        <begin position="1"/>
        <end position="91"/>
    </location>
</feature>
<gene>
    <name type="primary">insA</name>
    <name type="ordered locus">HD_1971</name>
</gene>
<evidence type="ECO:0000250" key="1"/>
<evidence type="ECO:0000305" key="2"/>
<comment type="function">
    <text evidence="1">Absolutely required for transposition of IS1.</text>
</comment>
<comment type="similarity">
    <text evidence="2">Belongs to the IS1 elements InsA family.</text>
</comment>
<sequence>MASVSISCPSCSATDGVVRNGKSTAGHQRYLCSHCRKTWQLQFTYTASQPGTHQKIIDMAMNGVGCRATARIMGVGLNTILRHLKNSGRSR</sequence>
<accession>P59842</accession>
<proteinExistence type="inferred from homology"/>
<name>INSA_HAEDU</name>
<dbReference type="EMBL" id="AE017143">
    <property type="protein sequence ID" value="AAP96688.1"/>
    <property type="molecule type" value="Genomic_DNA"/>
</dbReference>
<dbReference type="SMR" id="P59842"/>
<dbReference type="STRING" id="233412.HD_1971"/>
<dbReference type="KEGG" id="hdu:HD_1971"/>
<dbReference type="eggNOG" id="COG3677">
    <property type="taxonomic scope" value="Bacteria"/>
</dbReference>
<dbReference type="HOGENOM" id="CLU_076276_6_3_6"/>
<dbReference type="Proteomes" id="UP000001022">
    <property type="component" value="Chromosome"/>
</dbReference>
<dbReference type="GO" id="GO:0006313">
    <property type="term" value="P:DNA transposition"/>
    <property type="evidence" value="ECO:0007669"/>
    <property type="project" value="InterPro"/>
</dbReference>
<dbReference type="InterPro" id="IPR024431">
    <property type="entry name" value="InsA_HTH_dom"/>
</dbReference>
<dbReference type="InterPro" id="IPR003220">
    <property type="entry name" value="InsA_N_dom_Znf"/>
</dbReference>
<dbReference type="InterPro" id="IPR051252">
    <property type="entry name" value="IS1_transposase_InsA"/>
</dbReference>
<dbReference type="PANTHER" id="PTHR47923">
    <property type="entry name" value="INSERTION ELEMENT IS1 1 PROTEIN INSA-RELATED"/>
    <property type="match status" value="1"/>
</dbReference>
<dbReference type="PANTHER" id="PTHR47923:SF1">
    <property type="entry name" value="INSERTION ELEMENT IS1 1 PROTEIN INSA-RELATED"/>
    <property type="match status" value="1"/>
</dbReference>
<dbReference type="Pfam" id="PF12759">
    <property type="entry name" value="HTH_Tnp_IS1"/>
    <property type="match status" value="1"/>
</dbReference>
<dbReference type="Pfam" id="PF03811">
    <property type="entry name" value="Zn_ribbon_InsA"/>
    <property type="match status" value="1"/>
</dbReference>